<evidence type="ECO:0000255" key="1">
    <source>
        <dbReference type="HAMAP-Rule" id="MF_01368"/>
    </source>
</evidence>
<evidence type="ECO:0000305" key="2"/>
<sequence length="127" mass="14365">MRHRKSGRQLNRNSSHRQAMFRNMAGSLVRHEIIKTTLPKAKELRRVVEPLITLAKTDSVANRRLAFARTRDNEIVAKLFNELGPRFASRAGGYTRILKCGFRAGDNAPMAYIELVDRSEKAEAAAE</sequence>
<gene>
    <name evidence="1" type="primary">rplQ</name>
    <name type="ordered locus">Ecok1_32810</name>
    <name type="ORF">APECO1_3153</name>
</gene>
<keyword id="KW-1185">Reference proteome</keyword>
<keyword id="KW-0687">Ribonucleoprotein</keyword>
<keyword id="KW-0689">Ribosomal protein</keyword>
<protein>
    <recommendedName>
        <fullName evidence="1">Large ribosomal subunit protein bL17</fullName>
    </recommendedName>
    <alternativeName>
        <fullName evidence="2">50S ribosomal protein L17</fullName>
    </alternativeName>
</protein>
<organism>
    <name type="scientific">Escherichia coli O1:K1 / APEC</name>
    <dbReference type="NCBI Taxonomy" id="405955"/>
    <lineage>
        <taxon>Bacteria</taxon>
        <taxon>Pseudomonadati</taxon>
        <taxon>Pseudomonadota</taxon>
        <taxon>Gammaproteobacteria</taxon>
        <taxon>Enterobacterales</taxon>
        <taxon>Enterobacteriaceae</taxon>
        <taxon>Escherichia</taxon>
    </lineage>
</organism>
<proteinExistence type="inferred from homology"/>
<name>RL17_ECOK1</name>
<feature type="chain" id="PRO_1000055817" description="Large ribosomal subunit protein bL17">
    <location>
        <begin position="1"/>
        <end position="127"/>
    </location>
</feature>
<reference key="1">
    <citation type="journal article" date="2007" name="J. Bacteriol.">
        <title>The genome sequence of avian pathogenic Escherichia coli strain O1:K1:H7 shares strong similarities with human extraintestinal pathogenic E. coli genomes.</title>
        <authorList>
            <person name="Johnson T.J."/>
            <person name="Kariyawasam S."/>
            <person name="Wannemuehler Y."/>
            <person name="Mangiamele P."/>
            <person name="Johnson S.J."/>
            <person name="Doetkott C."/>
            <person name="Skyberg J.A."/>
            <person name="Lynne A.M."/>
            <person name="Johnson J.R."/>
            <person name="Nolan L.K."/>
        </authorList>
    </citation>
    <scope>NUCLEOTIDE SEQUENCE [LARGE SCALE GENOMIC DNA]</scope>
</reference>
<accession>A1AGI5</accession>
<dbReference type="EMBL" id="CP000468">
    <property type="protein sequence ID" value="ABJ02775.1"/>
    <property type="molecule type" value="Genomic_DNA"/>
</dbReference>
<dbReference type="RefSeq" id="WP_001216368.1">
    <property type="nucleotide sequence ID" value="NZ_CADILS010000044.1"/>
</dbReference>
<dbReference type="SMR" id="A1AGI5"/>
<dbReference type="GeneID" id="97442834"/>
<dbReference type="KEGG" id="ecv:APECO1_3153"/>
<dbReference type="HOGENOM" id="CLU_074407_2_0_6"/>
<dbReference type="Proteomes" id="UP000008216">
    <property type="component" value="Chromosome"/>
</dbReference>
<dbReference type="GO" id="GO:0022625">
    <property type="term" value="C:cytosolic large ribosomal subunit"/>
    <property type="evidence" value="ECO:0007669"/>
    <property type="project" value="TreeGrafter"/>
</dbReference>
<dbReference type="GO" id="GO:0003735">
    <property type="term" value="F:structural constituent of ribosome"/>
    <property type="evidence" value="ECO:0007669"/>
    <property type="project" value="InterPro"/>
</dbReference>
<dbReference type="GO" id="GO:0006412">
    <property type="term" value="P:translation"/>
    <property type="evidence" value="ECO:0007669"/>
    <property type="project" value="UniProtKB-UniRule"/>
</dbReference>
<dbReference type="FunFam" id="3.90.1030.10:FF:000001">
    <property type="entry name" value="50S ribosomal protein L17"/>
    <property type="match status" value="1"/>
</dbReference>
<dbReference type="Gene3D" id="3.90.1030.10">
    <property type="entry name" value="Ribosomal protein L17"/>
    <property type="match status" value="1"/>
</dbReference>
<dbReference type="HAMAP" id="MF_01368">
    <property type="entry name" value="Ribosomal_bL17"/>
    <property type="match status" value="1"/>
</dbReference>
<dbReference type="InterPro" id="IPR000456">
    <property type="entry name" value="Ribosomal_bL17"/>
</dbReference>
<dbReference type="InterPro" id="IPR047859">
    <property type="entry name" value="Ribosomal_bL17_CS"/>
</dbReference>
<dbReference type="InterPro" id="IPR036373">
    <property type="entry name" value="Ribosomal_bL17_sf"/>
</dbReference>
<dbReference type="NCBIfam" id="TIGR00059">
    <property type="entry name" value="L17"/>
    <property type="match status" value="1"/>
</dbReference>
<dbReference type="PANTHER" id="PTHR14413:SF16">
    <property type="entry name" value="LARGE RIBOSOMAL SUBUNIT PROTEIN BL17M"/>
    <property type="match status" value="1"/>
</dbReference>
<dbReference type="PANTHER" id="PTHR14413">
    <property type="entry name" value="RIBOSOMAL PROTEIN L17"/>
    <property type="match status" value="1"/>
</dbReference>
<dbReference type="Pfam" id="PF01196">
    <property type="entry name" value="Ribosomal_L17"/>
    <property type="match status" value="1"/>
</dbReference>
<dbReference type="SUPFAM" id="SSF64263">
    <property type="entry name" value="Prokaryotic ribosomal protein L17"/>
    <property type="match status" value="1"/>
</dbReference>
<dbReference type="PROSITE" id="PS01167">
    <property type="entry name" value="RIBOSOMAL_L17"/>
    <property type="match status" value="1"/>
</dbReference>
<comment type="subunit">
    <text evidence="1">Part of the 50S ribosomal subunit. Contacts protein L32.</text>
</comment>
<comment type="similarity">
    <text evidence="1">Belongs to the bacterial ribosomal protein bL17 family.</text>
</comment>